<keyword id="KW-1015">Disulfide bond</keyword>
<keyword id="KW-0265">Erythrocyte maturation</keyword>
<keyword id="KW-0325">Glycoprotein</keyword>
<keyword id="KW-0372">Hormone</keyword>
<keyword id="KW-0964">Secreted</keyword>
<keyword id="KW-0732">Signal</keyword>
<organism>
    <name type="scientific">Spalax golani</name>
    <name type="common">Golan Heights blind mole rat</name>
    <name type="synonym">Nannospalax golani</name>
    <dbReference type="NCBI Taxonomy" id="191382"/>
    <lineage>
        <taxon>Eukaryota</taxon>
        <taxon>Metazoa</taxon>
        <taxon>Chordata</taxon>
        <taxon>Craniata</taxon>
        <taxon>Vertebrata</taxon>
        <taxon>Euteleostomi</taxon>
        <taxon>Mammalia</taxon>
        <taxon>Eutheria</taxon>
        <taxon>Euarchontoglires</taxon>
        <taxon>Glires</taxon>
        <taxon>Rodentia</taxon>
        <taxon>Myomorpha</taxon>
        <taxon>Muroidea</taxon>
        <taxon>Spalacidae</taxon>
        <taxon>Spalacinae</taxon>
        <taxon>Nannospalax</taxon>
    </lineage>
</organism>
<reference key="1">
    <citation type="journal article" date="2004" name="Proc. Natl. Acad. Sci. U.S.A.">
        <title>Hypoxic stress tolerance of the blind subterranean mole rat: expression of erythropoietin and hypoxia-inducible factor 1 alpha.</title>
        <authorList>
            <person name="Shams I."/>
            <person name="Avivi A."/>
            <person name="Eviatar N."/>
        </authorList>
    </citation>
    <scope>NUCLEOTIDE SEQUENCE [GENOMIC DNA]</scope>
    <source>
        <tissue>Liver</tissue>
    </source>
</reference>
<feature type="signal peptide" evidence="3">
    <location>
        <begin position="1"/>
        <end position="26"/>
    </location>
</feature>
<feature type="chain" id="PRO_0000256702" description="Erythropoietin">
    <location>
        <begin position="27"/>
        <end position="192"/>
    </location>
</feature>
<feature type="glycosylation site" description="N-linked (GlcNAc...) asparagine" evidence="3">
    <location>
        <position position="50"/>
    </location>
</feature>
<feature type="glycosylation site" description="N-linked (GlcNAc...) asparagine" evidence="3">
    <location>
        <position position="64"/>
    </location>
</feature>
<feature type="glycosylation site" description="N-linked (GlcNAc...) asparagine" evidence="3">
    <location>
        <position position="109"/>
    </location>
</feature>
<feature type="disulfide bond" evidence="1">
    <location>
        <begin position="33"/>
        <end position="187"/>
    </location>
</feature>
<proteinExistence type="inferred from homology"/>
<sequence length="192" mass="21344">MGVPDCLALPLLVTFLLLSLGLPVLGAPPRLICDSRVLERYILEAKEAENITMGCAEGPRFNENFTVPDTKVNFYAWKTMGVEEQAVEVWQGLSLLFEAILQAQAVLANSSQPSEMLQLHVDKAISGLRSLTSLLRALGAQKEAISPPDTTQVIPLRRFTVDTFCKLFRIYSNFLRGKLKLYTGEACRRGDR</sequence>
<gene>
    <name type="primary">EPO</name>
</gene>
<accession>Q6H8T2</accession>
<comment type="function">
    <text evidence="2">Hormone involved in the regulation of erythrocyte proliferation and differentiation and the maintenance of a physiological level of circulating erythrocyte mass. Binds to EPOR leading to EPOR dimerization and JAK2 activation thereby activating specific downstream effectors, including STAT1 and STAT3.</text>
</comment>
<comment type="subcellular location">
    <subcellularLocation>
        <location evidence="1">Secreted</location>
    </subcellularLocation>
</comment>
<comment type="similarity">
    <text evidence="4">Belongs to the EPO/TPO family.</text>
</comment>
<name>EPO_SPAGO</name>
<dbReference type="EMBL" id="AJ715792">
    <property type="protein sequence ID" value="CAG29397.1"/>
    <property type="molecule type" value="Genomic_DNA"/>
</dbReference>
<dbReference type="SMR" id="Q6H8T2"/>
<dbReference type="GlyCosmos" id="Q6H8T2">
    <property type="glycosylation" value="3 sites, No reported glycans"/>
</dbReference>
<dbReference type="GO" id="GO:0005615">
    <property type="term" value="C:extracellular space"/>
    <property type="evidence" value="ECO:0007669"/>
    <property type="project" value="TreeGrafter"/>
</dbReference>
<dbReference type="GO" id="GO:0005125">
    <property type="term" value="F:cytokine activity"/>
    <property type="evidence" value="ECO:0007669"/>
    <property type="project" value="TreeGrafter"/>
</dbReference>
<dbReference type="GO" id="GO:0005128">
    <property type="term" value="F:erythropoietin receptor binding"/>
    <property type="evidence" value="ECO:0007669"/>
    <property type="project" value="InterPro"/>
</dbReference>
<dbReference type="GO" id="GO:0005179">
    <property type="term" value="F:hormone activity"/>
    <property type="evidence" value="ECO:0007669"/>
    <property type="project" value="UniProtKB-KW"/>
</dbReference>
<dbReference type="GO" id="GO:0030295">
    <property type="term" value="F:protein kinase activator activity"/>
    <property type="evidence" value="ECO:0007669"/>
    <property type="project" value="TreeGrafter"/>
</dbReference>
<dbReference type="GO" id="GO:0043249">
    <property type="term" value="P:erythrocyte maturation"/>
    <property type="evidence" value="ECO:0007669"/>
    <property type="project" value="UniProtKB-KW"/>
</dbReference>
<dbReference type="GO" id="GO:0038162">
    <property type="term" value="P:erythropoietin-mediated signaling pathway"/>
    <property type="evidence" value="ECO:0007669"/>
    <property type="project" value="TreeGrafter"/>
</dbReference>
<dbReference type="GO" id="GO:0008284">
    <property type="term" value="P:positive regulation of cell population proliferation"/>
    <property type="evidence" value="ECO:0007669"/>
    <property type="project" value="TreeGrafter"/>
</dbReference>
<dbReference type="GO" id="GO:0046579">
    <property type="term" value="P:positive regulation of Ras protein signal transduction"/>
    <property type="evidence" value="ECO:0007669"/>
    <property type="project" value="TreeGrafter"/>
</dbReference>
<dbReference type="FunFam" id="1.20.1250.10:FF:000013">
    <property type="entry name" value="Erythropoietin"/>
    <property type="match status" value="1"/>
</dbReference>
<dbReference type="Gene3D" id="1.20.1250.10">
    <property type="match status" value="1"/>
</dbReference>
<dbReference type="InterPro" id="IPR009079">
    <property type="entry name" value="4_helix_cytokine-like_core"/>
</dbReference>
<dbReference type="InterPro" id="IPR019767">
    <property type="entry name" value="EPO/TPO_CS"/>
</dbReference>
<dbReference type="InterPro" id="IPR001323">
    <property type="entry name" value="EPO_TPO"/>
</dbReference>
<dbReference type="InterPro" id="IPR003013">
    <property type="entry name" value="Erythroptn"/>
</dbReference>
<dbReference type="PANTHER" id="PTHR10370">
    <property type="entry name" value="ERYTHROPOIETIN"/>
    <property type="match status" value="1"/>
</dbReference>
<dbReference type="PANTHER" id="PTHR10370:SF0">
    <property type="entry name" value="ERYTHROPOIETIN"/>
    <property type="match status" value="1"/>
</dbReference>
<dbReference type="Pfam" id="PF00758">
    <property type="entry name" value="EPO_TPO"/>
    <property type="match status" value="1"/>
</dbReference>
<dbReference type="PIRSF" id="PIRSF001951">
    <property type="entry name" value="EPO"/>
    <property type="match status" value="1"/>
</dbReference>
<dbReference type="PRINTS" id="PR00272">
    <property type="entry name" value="ERYTHROPTN"/>
</dbReference>
<dbReference type="SUPFAM" id="SSF47266">
    <property type="entry name" value="4-helical cytokines"/>
    <property type="match status" value="1"/>
</dbReference>
<dbReference type="PROSITE" id="PS00817">
    <property type="entry name" value="EPO_TPO"/>
    <property type="match status" value="1"/>
</dbReference>
<evidence type="ECO:0000250" key="1"/>
<evidence type="ECO:0000250" key="2">
    <source>
        <dbReference type="UniProtKB" id="P01588"/>
    </source>
</evidence>
<evidence type="ECO:0000255" key="3"/>
<evidence type="ECO:0000305" key="4"/>
<protein>
    <recommendedName>
        <fullName>Erythropoietin</fullName>
    </recommendedName>
</protein>